<dbReference type="EMBL" id="BX936398">
    <property type="protein sequence ID" value="CAH20427.1"/>
    <property type="molecule type" value="Genomic_DNA"/>
</dbReference>
<dbReference type="RefSeq" id="WP_011191959.1">
    <property type="nucleotide sequence ID" value="NC_006155.1"/>
</dbReference>
<dbReference type="SMR" id="Q66D62"/>
<dbReference type="GeneID" id="49786740"/>
<dbReference type="KEGG" id="ypo:BZ17_1341"/>
<dbReference type="KEGG" id="yps:YPTB1187"/>
<dbReference type="PATRIC" id="fig|273123.14.peg.1432"/>
<dbReference type="Proteomes" id="UP000001011">
    <property type="component" value="Chromosome"/>
</dbReference>
<dbReference type="GO" id="GO:0005737">
    <property type="term" value="C:cytoplasm"/>
    <property type="evidence" value="ECO:0007669"/>
    <property type="project" value="UniProtKB-SubCell"/>
</dbReference>
<dbReference type="GO" id="GO:0009380">
    <property type="term" value="C:excinuclease repair complex"/>
    <property type="evidence" value="ECO:0007669"/>
    <property type="project" value="InterPro"/>
</dbReference>
<dbReference type="GO" id="GO:0005524">
    <property type="term" value="F:ATP binding"/>
    <property type="evidence" value="ECO:0007669"/>
    <property type="project" value="UniProtKB-UniRule"/>
</dbReference>
<dbReference type="GO" id="GO:0016887">
    <property type="term" value="F:ATP hydrolysis activity"/>
    <property type="evidence" value="ECO:0007669"/>
    <property type="project" value="InterPro"/>
</dbReference>
<dbReference type="GO" id="GO:0003677">
    <property type="term" value="F:DNA binding"/>
    <property type="evidence" value="ECO:0007669"/>
    <property type="project" value="UniProtKB-UniRule"/>
</dbReference>
<dbReference type="GO" id="GO:0009381">
    <property type="term" value="F:excinuclease ABC activity"/>
    <property type="evidence" value="ECO:0007669"/>
    <property type="project" value="UniProtKB-UniRule"/>
</dbReference>
<dbReference type="GO" id="GO:0006289">
    <property type="term" value="P:nucleotide-excision repair"/>
    <property type="evidence" value="ECO:0007669"/>
    <property type="project" value="UniProtKB-UniRule"/>
</dbReference>
<dbReference type="GO" id="GO:0009432">
    <property type="term" value="P:SOS response"/>
    <property type="evidence" value="ECO:0007669"/>
    <property type="project" value="UniProtKB-UniRule"/>
</dbReference>
<dbReference type="CDD" id="cd17916">
    <property type="entry name" value="DEXHc_UvrB"/>
    <property type="match status" value="1"/>
</dbReference>
<dbReference type="CDD" id="cd18790">
    <property type="entry name" value="SF2_C_UvrB"/>
    <property type="match status" value="1"/>
</dbReference>
<dbReference type="FunFam" id="3.40.50.300:FF:000257">
    <property type="entry name" value="UvrABC system protein B"/>
    <property type="match status" value="1"/>
</dbReference>
<dbReference type="FunFam" id="3.40.50.300:FF:000401">
    <property type="entry name" value="UvrABC system protein B"/>
    <property type="match status" value="1"/>
</dbReference>
<dbReference type="FunFam" id="3.40.50.300:FF:000477">
    <property type="entry name" value="UvrABC system protein B"/>
    <property type="match status" value="1"/>
</dbReference>
<dbReference type="Gene3D" id="3.40.50.300">
    <property type="entry name" value="P-loop containing nucleotide triphosphate hydrolases"/>
    <property type="match status" value="3"/>
</dbReference>
<dbReference type="Gene3D" id="4.10.860.10">
    <property type="entry name" value="UVR domain"/>
    <property type="match status" value="1"/>
</dbReference>
<dbReference type="HAMAP" id="MF_00204">
    <property type="entry name" value="UvrB"/>
    <property type="match status" value="1"/>
</dbReference>
<dbReference type="InterPro" id="IPR006935">
    <property type="entry name" value="Helicase/UvrB_N"/>
</dbReference>
<dbReference type="InterPro" id="IPR014001">
    <property type="entry name" value="Helicase_ATP-bd"/>
</dbReference>
<dbReference type="InterPro" id="IPR001650">
    <property type="entry name" value="Helicase_C-like"/>
</dbReference>
<dbReference type="InterPro" id="IPR027417">
    <property type="entry name" value="P-loop_NTPase"/>
</dbReference>
<dbReference type="InterPro" id="IPR001943">
    <property type="entry name" value="UVR_dom"/>
</dbReference>
<dbReference type="InterPro" id="IPR036876">
    <property type="entry name" value="UVR_dom_sf"/>
</dbReference>
<dbReference type="InterPro" id="IPR004807">
    <property type="entry name" value="UvrB"/>
</dbReference>
<dbReference type="InterPro" id="IPR041471">
    <property type="entry name" value="UvrB_inter"/>
</dbReference>
<dbReference type="InterPro" id="IPR024759">
    <property type="entry name" value="UvrB_YAD/RRR_dom"/>
</dbReference>
<dbReference type="NCBIfam" id="NF003673">
    <property type="entry name" value="PRK05298.1"/>
    <property type="match status" value="1"/>
</dbReference>
<dbReference type="NCBIfam" id="TIGR00631">
    <property type="entry name" value="uvrb"/>
    <property type="match status" value="1"/>
</dbReference>
<dbReference type="PANTHER" id="PTHR24029">
    <property type="entry name" value="UVRABC SYSTEM PROTEIN B"/>
    <property type="match status" value="1"/>
</dbReference>
<dbReference type="PANTHER" id="PTHR24029:SF0">
    <property type="entry name" value="UVRABC SYSTEM PROTEIN B"/>
    <property type="match status" value="1"/>
</dbReference>
<dbReference type="Pfam" id="PF00271">
    <property type="entry name" value="Helicase_C"/>
    <property type="match status" value="1"/>
</dbReference>
<dbReference type="Pfam" id="PF04851">
    <property type="entry name" value="ResIII"/>
    <property type="match status" value="1"/>
</dbReference>
<dbReference type="Pfam" id="PF02151">
    <property type="entry name" value="UVR"/>
    <property type="match status" value="1"/>
</dbReference>
<dbReference type="Pfam" id="PF12344">
    <property type="entry name" value="UvrB"/>
    <property type="match status" value="1"/>
</dbReference>
<dbReference type="Pfam" id="PF17757">
    <property type="entry name" value="UvrB_inter"/>
    <property type="match status" value="1"/>
</dbReference>
<dbReference type="SMART" id="SM00487">
    <property type="entry name" value="DEXDc"/>
    <property type="match status" value="1"/>
</dbReference>
<dbReference type="SMART" id="SM00490">
    <property type="entry name" value="HELICc"/>
    <property type="match status" value="1"/>
</dbReference>
<dbReference type="SUPFAM" id="SSF46600">
    <property type="entry name" value="C-terminal UvrC-binding domain of UvrB"/>
    <property type="match status" value="1"/>
</dbReference>
<dbReference type="SUPFAM" id="SSF52540">
    <property type="entry name" value="P-loop containing nucleoside triphosphate hydrolases"/>
    <property type="match status" value="2"/>
</dbReference>
<dbReference type="PROSITE" id="PS51192">
    <property type="entry name" value="HELICASE_ATP_BIND_1"/>
    <property type="match status" value="1"/>
</dbReference>
<dbReference type="PROSITE" id="PS51194">
    <property type="entry name" value="HELICASE_CTER"/>
    <property type="match status" value="1"/>
</dbReference>
<dbReference type="PROSITE" id="PS50151">
    <property type="entry name" value="UVR"/>
    <property type="match status" value="1"/>
</dbReference>
<sequence>MSKSFKLHSVFKPAGDQPEAIRKLEEGLENGLAHQTLLGVTGSGKTFTVANVIADLNRPTMILAPNKTLAAQLYGEMKEFFPDNAVEYFVSYYDYYQPEAYVPSSDTFIEKDASVNEHIEQMRLSATKALLERRDVVVVASVSAIYGLGDPDLYLKMMLHLTRGMIIDQRSILRRLSELQYSRNDQVFQRGTFRVRGEVIDIFPAESDEWALRVELFDEEVERLSIFDPLTGQLQHEVPRFTVYPKTHYVTPRERILQAMEEIKVELAERRQVLLANNKLLEEQRLSQRTQFDLEMMNELGYCSGIENYSRYLSGRGPGEAPPTLFDYLPADGLLIVDESHVTIPQIGGMYKGDRSRKETLVEYGFRLPSALDNRPMRFEEFEALAPQTIYVSATPGKYELEKSGGDIIEQVVRPTGLLDPLIEVRPVATQVDDLLSEIRIRAAINERVLVTTLTKRMAEDLTDYLSEHGAKVRYLHSDIDTVERVEIIRDLRLGEFDVLVGINLLREGLDMPEVSLVAILDADKEGFLRSERSLIQTIGRAARNLNGKAILYGDRITASMEKAIGETERRRAKQQAYNEERGIIPQGLNKKIGDILQLGQPSMRGKGKGRGSHKMADTTQYQSLSPKALDQKIRELEAKMYTYAQNLEFEQAAELRDQVHQLRQQFIAIS</sequence>
<name>UVRB_YERPS</name>
<protein>
    <recommendedName>
        <fullName evidence="1">UvrABC system protein B</fullName>
        <shortName evidence="1">Protein UvrB</shortName>
    </recommendedName>
    <alternativeName>
        <fullName evidence="1">Excinuclease ABC subunit B</fullName>
    </alternativeName>
</protein>
<feature type="chain" id="PRO_0000227386" description="UvrABC system protein B">
    <location>
        <begin position="1"/>
        <end position="671"/>
    </location>
</feature>
<feature type="domain" description="Helicase ATP-binding" evidence="1">
    <location>
        <begin position="26"/>
        <end position="414"/>
    </location>
</feature>
<feature type="domain" description="Helicase C-terminal" evidence="1">
    <location>
        <begin position="431"/>
        <end position="597"/>
    </location>
</feature>
<feature type="domain" description="UVR" evidence="1">
    <location>
        <begin position="631"/>
        <end position="666"/>
    </location>
</feature>
<feature type="short sequence motif" description="Beta-hairpin">
    <location>
        <begin position="92"/>
        <end position="115"/>
    </location>
</feature>
<feature type="binding site" evidence="1">
    <location>
        <begin position="39"/>
        <end position="46"/>
    </location>
    <ligand>
        <name>ATP</name>
        <dbReference type="ChEBI" id="CHEBI:30616"/>
    </ligand>
</feature>
<organism>
    <name type="scientific">Yersinia pseudotuberculosis serotype I (strain IP32953)</name>
    <dbReference type="NCBI Taxonomy" id="273123"/>
    <lineage>
        <taxon>Bacteria</taxon>
        <taxon>Pseudomonadati</taxon>
        <taxon>Pseudomonadota</taxon>
        <taxon>Gammaproteobacteria</taxon>
        <taxon>Enterobacterales</taxon>
        <taxon>Yersiniaceae</taxon>
        <taxon>Yersinia</taxon>
    </lineage>
</organism>
<keyword id="KW-0067">ATP-binding</keyword>
<keyword id="KW-0963">Cytoplasm</keyword>
<keyword id="KW-0227">DNA damage</keyword>
<keyword id="KW-0228">DNA excision</keyword>
<keyword id="KW-0234">DNA repair</keyword>
<keyword id="KW-0267">Excision nuclease</keyword>
<keyword id="KW-0547">Nucleotide-binding</keyword>
<keyword id="KW-0742">SOS response</keyword>
<reference key="1">
    <citation type="journal article" date="2004" name="Proc. Natl. Acad. Sci. U.S.A.">
        <title>Insights into the evolution of Yersinia pestis through whole-genome comparison with Yersinia pseudotuberculosis.</title>
        <authorList>
            <person name="Chain P.S.G."/>
            <person name="Carniel E."/>
            <person name="Larimer F.W."/>
            <person name="Lamerdin J."/>
            <person name="Stoutland P.O."/>
            <person name="Regala W.M."/>
            <person name="Georgescu A.M."/>
            <person name="Vergez L.M."/>
            <person name="Land M.L."/>
            <person name="Motin V.L."/>
            <person name="Brubaker R.R."/>
            <person name="Fowler J."/>
            <person name="Hinnebusch J."/>
            <person name="Marceau M."/>
            <person name="Medigue C."/>
            <person name="Simonet M."/>
            <person name="Chenal-Francisque V."/>
            <person name="Souza B."/>
            <person name="Dacheux D."/>
            <person name="Elliott J.M."/>
            <person name="Derbise A."/>
            <person name="Hauser L.J."/>
            <person name="Garcia E."/>
        </authorList>
    </citation>
    <scope>NUCLEOTIDE SEQUENCE [LARGE SCALE GENOMIC DNA]</scope>
    <source>
        <strain>IP32953</strain>
    </source>
</reference>
<evidence type="ECO:0000255" key="1">
    <source>
        <dbReference type="HAMAP-Rule" id="MF_00204"/>
    </source>
</evidence>
<proteinExistence type="inferred from homology"/>
<comment type="function">
    <text evidence="1">The UvrABC repair system catalyzes the recognition and processing of DNA lesions. A damage recognition complex composed of 2 UvrA and 2 UvrB subunits scans DNA for abnormalities. Upon binding of the UvrA(2)B(2) complex to a putative damaged site, the DNA wraps around one UvrB monomer. DNA wrap is dependent on ATP binding by UvrB and probably causes local melting of the DNA helix, facilitating insertion of UvrB beta-hairpin between the DNA strands. Then UvrB probes one DNA strand for the presence of a lesion. If a lesion is found the UvrA subunits dissociate and the UvrB-DNA preincision complex is formed. This complex is subsequently bound by UvrC and the second UvrB is released. If no lesion is found, the DNA wraps around the other UvrB subunit that will check the other stand for damage.</text>
</comment>
<comment type="subunit">
    <text evidence="1">Forms a heterotetramer with UvrA during the search for lesions. Interacts with UvrC in an incision complex.</text>
</comment>
<comment type="subcellular location">
    <subcellularLocation>
        <location evidence="1">Cytoplasm</location>
    </subcellularLocation>
</comment>
<comment type="domain">
    <text evidence="1">The beta-hairpin motif is involved in DNA binding.</text>
</comment>
<comment type="similarity">
    <text evidence="1">Belongs to the UvrB family.</text>
</comment>
<accession>Q66D62</accession>
<gene>
    <name evidence="1" type="primary">uvrB</name>
    <name type="ordered locus">YPTB1187</name>
</gene>